<name>ABEC2_MOUSE</name>
<protein>
    <recommendedName>
        <fullName>C-&gt;U-editing enzyme APOBEC-2</fullName>
        <ecNumber>3.5.4.36</ecNumber>
    </recommendedName>
    <alternativeName>
        <fullName>mRNA(cytosine(6666)) deaminase 2</fullName>
    </alternativeName>
</protein>
<reference key="1">
    <citation type="journal article" date="1999" name="Biochem. Biophys. Res. Commun.">
        <title>APOBEC-2, a cardiac- and skeletal muscle-specific member of the cytidine deaminase supergene family.</title>
        <authorList>
            <person name="Liao W."/>
            <person name="Hong S.-H."/>
            <person name="Chan B.H.-J."/>
            <person name="Rudolph F.B."/>
            <person name="Clark S.C."/>
            <person name="Chan L."/>
        </authorList>
    </citation>
    <scope>NUCLEOTIDE SEQUENCE [MRNA]</scope>
    <source>
        <tissue>Heart</tissue>
    </source>
</reference>
<reference key="2">
    <citation type="journal article" date="2004" name="Genome Res.">
        <title>The status, quality, and expansion of the NIH full-length cDNA project: the Mammalian Gene Collection (MGC).</title>
        <authorList>
            <consortium name="The MGC Project Team"/>
        </authorList>
    </citation>
    <scope>NUCLEOTIDE SEQUENCE [LARGE SCALE MRNA]</scope>
    <source>
        <tissue>Uterus</tissue>
    </source>
</reference>
<reference key="3">
    <citation type="journal article" date="2003" name="Cell">
        <title>Species-specific exclusion of APOBEC3G from HIV-1 virions by Vif.</title>
        <authorList>
            <person name="Mariani R."/>
            <person name="Chen D."/>
            <person name="Schroefelbauer B."/>
            <person name="Navarro F."/>
            <person name="Koenig R."/>
            <person name="Bollman B."/>
            <person name="Muenk C."/>
            <person name="Nymark-McMahon H."/>
            <person name="Landau N.R."/>
        </authorList>
    </citation>
    <scope>TISSUE SPECIFICITY</scope>
</reference>
<reference key="4">
    <citation type="journal article" date="2010" name="Cell">
        <title>A tissue-specific atlas of mouse protein phosphorylation and expression.</title>
        <authorList>
            <person name="Huttlin E.L."/>
            <person name="Jedrychowski M.P."/>
            <person name="Elias J.E."/>
            <person name="Goswami T."/>
            <person name="Rad R."/>
            <person name="Beausoleil S.A."/>
            <person name="Villen J."/>
            <person name="Haas W."/>
            <person name="Sowa M.E."/>
            <person name="Gygi S.P."/>
        </authorList>
    </citation>
    <scope>IDENTIFICATION BY MASS SPECTROMETRY [LARGE SCALE ANALYSIS]</scope>
    <source>
        <tissue>Brown adipose tissue</tissue>
        <tissue>Heart</tissue>
        <tissue>Lung</tissue>
    </source>
</reference>
<sequence>MAQKEEAAEAAAPASQNGDDLENLEDPEKLKELIDLPPFEIVTGVRLPVNFFKFQFRNVEYSSGRNKTFLCYVVEVQSKGGQAQATQGYLEDEHAGAHAEEAFFNTILPAFDPALKYNVTWYVSSSPCAACADRILKTLSKTKNLRLLILVSRLFMWEEPEVQAALKKLKEAGCKLRIMKPQDFEYIWQNFVEQEEGESKAFEPWEDIQENFLYYEEKLADILK</sequence>
<evidence type="ECO:0000250" key="1">
    <source>
        <dbReference type="UniProtKB" id="Q9Y235"/>
    </source>
</evidence>
<evidence type="ECO:0000255" key="2">
    <source>
        <dbReference type="PROSITE-ProRule" id="PRU01083"/>
    </source>
</evidence>
<evidence type="ECO:0000256" key="3">
    <source>
        <dbReference type="SAM" id="MobiDB-lite"/>
    </source>
</evidence>
<evidence type="ECO:0000269" key="4">
    <source>
    </source>
</evidence>
<evidence type="ECO:0000305" key="5"/>
<evidence type="ECO:0007829" key="6">
    <source>
        <dbReference type="PDB" id="2RPZ"/>
    </source>
</evidence>
<feature type="chain" id="PRO_0000171750" description="C-&gt;U-editing enzyme APOBEC-2">
    <location>
        <begin position="1"/>
        <end position="224"/>
    </location>
</feature>
<feature type="domain" description="CMP/dCMP-type deaminase" evidence="2">
    <location>
        <begin position="64"/>
        <end position="169"/>
    </location>
</feature>
<feature type="region of interest" description="Disordered" evidence="3">
    <location>
        <begin position="1"/>
        <end position="23"/>
    </location>
</feature>
<feature type="active site" description="Proton donor" evidence="1">
    <location>
        <position position="100"/>
    </location>
</feature>
<feature type="binding site" evidence="1">
    <location>
        <position position="60"/>
    </location>
    <ligand>
        <name>Zn(2+)</name>
        <dbReference type="ChEBI" id="CHEBI:29105"/>
        <note>catalytic</note>
    </ligand>
</feature>
<feature type="binding site" evidence="1">
    <location>
        <position position="98"/>
    </location>
    <ligand>
        <name>Zn(2+)</name>
        <dbReference type="ChEBI" id="CHEBI:29105"/>
        <note>catalytic</note>
    </ligand>
</feature>
<feature type="binding site" evidence="1">
    <location>
        <position position="128"/>
    </location>
    <ligand>
        <name>Zn(2+)</name>
        <dbReference type="ChEBI" id="CHEBI:29105"/>
        <note>catalytic</note>
    </ligand>
</feature>
<feature type="binding site" evidence="1">
    <location>
        <position position="131"/>
    </location>
    <ligand>
        <name>Zn(2+)</name>
        <dbReference type="ChEBI" id="CHEBI:29105"/>
        <note>catalytic</note>
    </ligand>
</feature>
<feature type="strand" evidence="6">
    <location>
        <begin position="46"/>
        <end position="48"/>
    </location>
</feature>
<feature type="helix" evidence="6">
    <location>
        <begin position="49"/>
        <end position="55"/>
    </location>
</feature>
<feature type="strand" evidence="6">
    <location>
        <begin position="69"/>
        <end position="75"/>
    </location>
</feature>
<feature type="strand" evidence="6">
    <location>
        <begin position="78"/>
        <end position="81"/>
    </location>
</feature>
<feature type="strand" evidence="6">
    <location>
        <begin position="85"/>
        <end position="91"/>
    </location>
</feature>
<feature type="helix" evidence="6">
    <location>
        <begin position="99"/>
        <end position="106"/>
    </location>
</feature>
<feature type="strand" evidence="6">
    <location>
        <begin position="107"/>
        <end position="109"/>
    </location>
</feature>
<feature type="strand" evidence="6">
    <location>
        <begin position="118"/>
        <end position="125"/>
    </location>
</feature>
<feature type="helix" evidence="6">
    <location>
        <begin position="131"/>
        <end position="139"/>
    </location>
</feature>
<feature type="strand" evidence="6">
    <location>
        <begin position="146"/>
        <end position="153"/>
    </location>
</feature>
<feature type="helix" evidence="6">
    <location>
        <begin position="162"/>
        <end position="172"/>
    </location>
</feature>
<feature type="strand" evidence="6">
    <location>
        <begin position="175"/>
        <end position="177"/>
    </location>
</feature>
<feature type="helix" evidence="6">
    <location>
        <begin position="181"/>
        <end position="189"/>
    </location>
</feature>
<feature type="strand" evidence="6">
    <location>
        <begin position="191"/>
        <end position="193"/>
    </location>
</feature>
<feature type="helix" evidence="6">
    <location>
        <begin position="210"/>
        <end position="223"/>
    </location>
</feature>
<proteinExistence type="evidence at protein level"/>
<organism>
    <name type="scientific">Mus musculus</name>
    <name type="common">Mouse</name>
    <dbReference type="NCBI Taxonomy" id="10090"/>
    <lineage>
        <taxon>Eukaryota</taxon>
        <taxon>Metazoa</taxon>
        <taxon>Chordata</taxon>
        <taxon>Craniata</taxon>
        <taxon>Vertebrata</taxon>
        <taxon>Euteleostomi</taxon>
        <taxon>Mammalia</taxon>
        <taxon>Eutheria</taxon>
        <taxon>Euarchontoglires</taxon>
        <taxon>Glires</taxon>
        <taxon>Rodentia</taxon>
        <taxon>Myomorpha</taxon>
        <taxon>Muroidea</taxon>
        <taxon>Muridae</taxon>
        <taxon>Murinae</taxon>
        <taxon>Mus</taxon>
        <taxon>Mus</taxon>
    </lineage>
</organism>
<keyword id="KW-0002">3D-structure</keyword>
<keyword id="KW-0378">Hydrolase</keyword>
<keyword id="KW-0479">Metal-binding</keyword>
<keyword id="KW-0507">mRNA processing</keyword>
<keyword id="KW-1185">Reference proteome</keyword>
<keyword id="KW-0862">Zinc</keyword>
<comment type="function">
    <text evidence="1">Probable C to U editing enzyme whose physiological substrate is not yet known. Does not display detectable apoB mRNA editing. Has a low intrinsic cytidine deaminase activity. May play a role in the epigenetic regulation of gene expression through the process of active DNA demethylation.</text>
</comment>
<comment type="catalytic activity">
    <reaction>
        <text>cytidine(6666) in apoB mRNA + H2O + H(+) = uridine(6666) in apoB mRNA + NH4(+)</text>
        <dbReference type="Rhea" id="RHEA:21772"/>
        <dbReference type="Rhea" id="RHEA-COMP:13888"/>
        <dbReference type="Rhea" id="RHEA-COMP:13889"/>
        <dbReference type="ChEBI" id="CHEBI:15377"/>
        <dbReference type="ChEBI" id="CHEBI:15378"/>
        <dbReference type="ChEBI" id="CHEBI:28938"/>
        <dbReference type="ChEBI" id="CHEBI:65315"/>
        <dbReference type="ChEBI" id="CHEBI:82748"/>
        <dbReference type="EC" id="3.5.4.36"/>
    </reaction>
</comment>
<comment type="cofactor">
    <cofactor evidence="1">
        <name>Zn(2+)</name>
        <dbReference type="ChEBI" id="CHEBI:29105"/>
    </cofactor>
    <text evidence="1">Binds 1 Zn(2+) ion per subunit.</text>
</comment>
<comment type="subunit">
    <text evidence="1">Homotetramer.</text>
</comment>
<comment type="tissue specificity">
    <text evidence="4">Expressed exclusively in heart and skeletal muscle.</text>
</comment>
<comment type="similarity">
    <text evidence="5">Belongs to the cytidine and deoxycytidylate deaminase family.</text>
</comment>
<dbReference type="EC" id="3.5.4.36"/>
<dbReference type="EMBL" id="AF161699">
    <property type="protein sequence ID" value="AAD45361.1"/>
    <property type="molecule type" value="mRNA"/>
</dbReference>
<dbReference type="EMBL" id="BC027530">
    <property type="protein sequence ID" value="AAH27530.1"/>
    <property type="molecule type" value="mRNA"/>
</dbReference>
<dbReference type="CCDS" id="CCDS28868.1"/>
<dbReference type="RefSeq" id="NP_033824.1">
    <property type="nucleotide sequence ID" value="NM_009694.3"/>
</dbReference>
<dbReference type="PDB" id="2RPZ">
    <property type="method" value="NMR"/>
    <property type="chains" value="A=46-224"/>
</dbReference>
<dbReference type="PDBsum" id="2RPZ"/>
<dbReference type="BMRB" id="Q9WV35"/>
<dbReference type="SMR" id="Q9WV35"/>
<dbReference type="BioGRID" id="198159">
    <property type="interactions" value="4"/>
</dbReference>
<dbReference type="FunCoup" id="Q9WV35">
    <property type="interactions" value="1501"/>
</dbReference>
<dbReference type="STRING" id="10090.ENSMUSP00000047402"/>
<dbReference type="GlyGen" id="Q9WV35">
    <property type="glycosylation" value="1 site, 1 O-linked glycan (1 site)"/>
</dbReference>
<dbReference type="iPTMnet" id="Q9WV35"/>
<dbReference type="PhosphoSitePlus" id="Q9WV35"/>
<dbReference type="jPOST" id="Q9WV35"/>
<dbReference type="PaxDb" id="10090-ENSMUSP00000047402"/>
<dbReference type="PeptideAtlas" id="Q9WV35"/>
<dbReference type="ProteomicsDB" id="285747"/>
<dbReference type="Antibodypedia" id="2816">
    <property type="antibodies" value="275 antibodies from 31 providers"/>
</dbReference>
<dbReference type="DNASU" id="11811"/>
<dbReference type="Ensembl" id="ENSMUST00000046549.5">
    <property type="protein sequence ID" value="ENSMUSP00000047402.4"/>
    <property type="gene ID" value="ENSMUSG00000040694.5"/>
</dbReference>
<dbReference type="GeneID" id="11811"/>
<dbReference type="KEGG" id="mmu:11811"/>
<dbReference type="UCSC" id="uc008cxx.1">
    <property type="organism name" value="mouse"/>
</dbReference>
<dbReference type="AGR" id="MGI:1343178"/>
<dbReference type="CTD" id="10930"/>
<dbReference type="MGI" id="MGI:1343178">
    <property type="gene designation" value="Apobec2"/>
</dbReference>
<dbReference type="VEuPathDB" id="HostDB:ENSMUSG00000040694"/>
<dbReference type="eggNOG" id="ENOG502RABR">
    <property type="taxonomic scope" value="Eukaryota"/>
</dbReference>
<dbReference type="GeneTree" id="ENSGT00940000156616"/>
<dbReference type="HOGENOM" id="CLU_080056_0_0_1"/>
<dbReference type="InParanoid" id="Q9WV35"/>
<dbReference type="OMA" id="WEEPDIQ"/>
<dbReference type="OrthoDB" id="8841220at2759"/>
<dbReference type="PhylomeDB" id="Q9WV35"/>
<dbReference type="TreeFam" id="TF331356"/>
<dbReference type="Reactome" id="R-MMU-72200">
    <property type="pathway name" value="mRNA Editing: C to U Conversion"/>
</dbReference>
<dbReference type="Reactome" id="R-MMU-75094">
    <property type="pathway name" value="Formation of the Editosome"/>
</dbReference>
<dbReference type="BioGRID-ORCS" id="11811">
    <property type="hits" value="3 hits in 80 CRISPR screens"/>
</dbReference>
<dbReference type="ChiTaRS" id="Apobec2">
    <property type="organism name" value="mouse"/>
</dbReference>
<dbReference type="EvolutionaryTrace" id="Q9WV35"/>
<dbReference type="PRO" id="PR:Q9WV35"/>
<dbReference type="Proteomes" id="UP000000589">
    <property type="component" value="Chromosome 17"/>
</dbReference>
<dbReference type="RNAct" id="Q9WV35">
    <property type="molecule type" value="protein"/>
</dbReference>
<dbReference type="Bgee" id="ENSMUSG00000040694">
    <property type="expression patterns" value="Expressed in quadriceps femoris and 77 other cell types or tissues"/>
</dbReference>
<dbReference type="GO" id="GO:0004126">
    <property type="term" value="F:cytidine deaminase activity"/>
    <property type="evidence" value="ECO:0000314"/>
    <property type="project" value="MGI"/>
</dbReference>
<dbReference type="GO" id="GO:0042802">
    <property type="term" value="F:identical protein binding"/>
    <property type="evidence" value="ECO:0007669"/>
    <property type="project" value="Ensembl"/>
</dbReference>
<dbReference type="GO" id="GO:0046872">
    <property type="term" value="F:metal ion binding"/>
    <property type="evidence" value="ECO:0007669"/>
    <property type="project" value="UniProtKB-KW"/>
</dbReference>
<dbReference type="GO" id="GO:0016554">
    <property type="term" value="P:cytidine to uridine editing"/>
    <property type="evidence" value="ECO:0000314"/>
    <property type="project" value="MGI"/>
</dbReference>
<dbReference type="GO" id="GO:0016556">
    <property type="term" value="P:mRNA modification"/>
    <property type="evidence" value="ECO:0000315"/>
    <property type="project" value="MGI"/>
</dbReference>
<dbReference type="GO" id="GO:0006397">
    <property type="term" value="P:mRNA processing"/>
    <property type="evidence" value="ECO:0007669"/>
    <property type="project" value="UniProtKB-KW"/>
</dbReference>
<dbReference type="GO" id="GO:0044029">
    <property type="term" value="P:positive regulation of gene expression via chromosomal CpG island demethylation"/>
    <property type="evidence" value="ECO:0000250"/>
    <property type="project" value="UniProtKB"/>
</dbReference>
<dbReference type="CDD" id="cd01283">
    <property type="entry name" value="cytidine_deaminase"/>
    <property type="match status" value="1"/>
</dbReference>
<dbReference type="FunFam" id="3.40.140.10:FF:000031">
    <property type="entry name" value="Probable C-&gt;U-editing enzyme APOBEC-2"/>
    <property type="match status" value="1"/>
</dbReference>
<dbReference type="Gene3D" id="3.40.140.10">
    <property type="entry name" value="Cytidine Deaminase, domain 2"/>
    <property type="match status" value="1"/>
</dbReference>
<dbReference type="InterPro" id="IPR050610">
    <property type="entry name" value="APOBEC_Cyt_Deaminase"/>
</dbReference>
<dbReference type="InterPro" id="IPR002125">
    <property type="entry name" value="CMP_dCMP_dom"/>
</dbReference>
<dbReference type="InterPro" id="IPR016193">
    <property type="entry name" value="Cytidine_deaminase-like"/>
</dbReference>
<dbReference type="PANTHER" id="PTHR13857:SF4">
    <property type="entry name" value="C-U-EDITING ENZYME APOBEC-2"/>
    <property type="match status" value="1"/>
</dbReference>
<dbReference type="PANTHER" id="PTHR13857">
    <property type="entry name" value="MRNA EDITING ENZYME"/>
    <property type="match status" value="1"/>
</dbReference>
<dbReference type="Pfam" id="PF18772">
    <property type="entry name" value="APOBEC2"/>
    <property type="match status" value="1"/>
</dbReference>
<dbReference type="SUPFAM" id="SSF53927">
    <property type="entry name" value="Cytidine deaminase-like"/>
    <property type="match status" value="1"/>
</dbReference>
<dbReference type="PROSITE" id="PS51747">
    <property type="entry name" value="CYT_DCMP_DEAMINASES_2"/>
    <property type="match status" value="1"/>
</dbReference>
<accession>Q9WV35</accession>
<gene>
    <name type="primary">Apobec2</name>
</gene>